<organism>
    <name type="scientific">Wolinella succinogenes (strain ATCC 29543 / DSM 1740 / CCUG 13145 / JCM 31913 / LMG 7466 / NCTC 11488 / FDC 602W)</name>
    <name type="common">Vibrio succinogenes</name>
    <dbReference type="NCBI Taxonomy" id="273121"/>
    <lineage>
        <taxon>Bacteria</taxon>
        <taxon>Pseudomonadati</taxon>
        <taxon>Campylobacterota</taxon>
        <taxon>Epsilonproteobacteria</taxon>
        <taxon>Campylobacterales</taxon>
        <taxon>Helicobacteraceae</taxon>
        <taxon>Wolinella</taxon>
    </lineage>
</organism>
<gene>
    <name type="ordered locus">WS2204</name>
</gene>
<feature type="chain" id="PRO_0000157471" description="UPF0324 membrane protein WS2204">
    <location>
        <begin position="1"/>
        <end position="333"/>
    </location>
</feature>
<feature type="transmembrane region" description="Helical" evidence="1">
    <location>
        <begin position="4"/>
        <end position="26"/>
    </location>
</feature>
<feature type="transmembrane region" description="Helical" evidence="1">
    <location>
        <begin position="31"/>
        <end position="53"/>
    </location>
</feature>
<feature type="transmembrane region" description="Helical" evidence="1">
    <location>
        <begin position="59"/>
        <end position="81"/>
    </location>
</feature>
<feature type="transmembrane region" description="Helical" evidence="1">
    <location>
        <begin position="88"/>
        <end position="110"/>
    </location>
</feature>
<feature type="transmembrane region" description="Helical" evidence="1">
    <location>
        <begin position="125"/>
        <end position="147"/>
    </location>
</feature>
<feature type="transmembrane region" description="Helical" evidence="1">
    <location>
        <begin position="154"/>
        <end position="176"/>
    </location>
</feature>
<feature type="transmembrane region" description="Helical" evidence="1">
    <location>
        <begin position="218"/>
        <end position="240"/>
    </location>
</feature>
<feature type="transmembrane region" description="Helical" evidence="1">
    <location>
        <begin position="253"/>
        <end position="275"/>
    </location>
</feature>
<feature type="transmembrane region" description="Helical" evidence="1">
    <location>
        <begin position="310"/>
        <end position="332"/>
    </location>
</feature>
<sequence>MKLSIRPFVLGIALCTLIGIVAFGLAKIPFFLSLHLSPLILSVLVGMALAPWYKKSGQIGIIGVLWCGKRLLRLGIVLFGFQVTLQSLLGVGVEGFLIALLVVAGIFTLGSYLGVKLLGLDRETSMLIACGSAVCGAAAILALESLSKTPAHKTAIAVGVVVLFGLLSMFLYPLVYEAGFIPLSPLQEGIYTGATLHEVANVIGASANLPKEAQEAAVIVKMIRVILLVPLLLLLSFTILKHREKGSNEVAIPWFALLFLGAILLGSLFFFPSWLRSLLQSGSLFSLTLAMGALGLVSDFSKLQGVGAKALALGAILWGVLLFGGLGLVKLLA</sequence>
<comment type="subcellular location">
    <subcellularLocation>
        <location evidence="2">Cell membrane</location>
        <topology evidence="2">Multi-pass membrane protein</topology>
    </subcellularLocation>
</comment>
<comment type="similarity">
    <text evidence="2">Belongs to the UPF0324 family.</text>
</comment>
<proteinExistence type="inferred from homology"/>
<evidence type="ECO:0000255" key="1"/>
<evidence type="ECO:0000305" key="2"/>
<name>Y2204_WOLSU</name>
<protein>
    <recommendedName>
        <fullName>UPF0324 membrane protein WS2204</fullName>
    </recommendedName>
</protein>
<dbReference type="EMBL" id="BX571662">
    <property type="protein sequence ID" value="CAE11194.1"/>
    <property type="molecule type" value="Genomic_DNA"/>
</dbReference>
<dbReference type="RefSeq" id="WP_011139976.1">
    <property type="nucleotide sequence ID" value="NC_005090.1"/>
</dbReference>
<dbReference type="STRING" id="273121.WS2204"/>
<dbReference type="KEGG" id="wsu:WS2204"/>
<dbReference type="eggNOG" id="COG2855">
    <property type="taxonomic scope" value="Bacteria"/>
</dbReference>
<dbReference type="HOGENOM" id="CLU_033541_0_0_7"/>
<dbReference type="Proteomes" id="UP000000422">
    <property type="component" value="Chromosome"/>
</dbReference>
<dbReference type="GO" id="GO:0005886">
    <property type="term" value="C:plasma membrane"/>
    <property type="evidence" value="ECO:0007669"/>
    <property type="project" value="UniProtKB-SubCell"/>
</dbReference>
<dbReference type="InterPro" id="IPR018383">
    <property type="entry name" value="UPF0324_pro"/>
</dbReference>
<dbReference type="PANTHER" id="PTHR30106">
    <property type="entry name" value="INNER MEMBRANE PROTEIN YEIH-RELATED"/>
    <property type="match status" value="1"/>
</dbReference>
<dbReference type="PANTHER" id="PTHR30106:SF2">
    <property type="entry name" value="UPF0324 INNER MEMBRANE PROTEIN YEIH"/>
    <property type="match status" value="1"/>
</dbReference>
<dbReference type="Pfam" id="PF03601">
    <property type="entry name" value="Cons_hypoth698"/>
    <property type="match status" value="1"/>
</dbReference>
<keyword id="KW-1003">Cell membrane</keyword>
<keyword id="KW-0472">Membrane</keyword>
<keyword id="KW-1185">Reference proteome</keyword>
<keyword id="KW-0812">Transmembrane</keyword>
<keyword id="KW-1133">Transmembrane helix</keyword>
<reference key="1">
    <citation type="journal article" date="2003" name="Proc. Natl. Acad. Sci. U.S.A.">
        <title>Complete genome sequence and analysis of Wolinella succinogenes.</title>
        <authorList>
            <person name="Baar C."/>
            <person name="Eppinger M."/>
            <person name="Raddatz G."/>
            <person name="Simon J."/>
            <person name="Lanz C."/>
            <person name="Klimmek O."/>
            <person name="Nandakumar R."/>
            <person name="Gross R."/>
            <person name="Rosinus A."/>
            <person name="Keller H."/>
            <person name="Jagtap P."/>
            <person name="Linke B."/>
            <person name="Meyer F."/>
            <person name="Lederer H."/>
            <person name="Schuster S.C."/>
        </authorList>
    </citation>
    <scope>NUCLEOTIDE SEQUENCE [LARGE SCALE GENOMIC DNA]</scope>
    <source>
        <strain>ATCC 29543 / DSM 1740 / CCUG 13145 / JCM 31913 / LMG 7466 / NCTC 11488 / FDC 602W</strain>
    </source>
</reference>
<accession>Q7MQL4</accession>